<dbReference type="EC" id="3.1.26.4" evidence="1"/>
<dbReference type="EMBL" id="CP000577">
    <property type="protein sequence ID" value="ABN77629.1"/>
    <property type="molecule type" value="Genomic_DNA"/>
</dbReference>
<dbReference type="RefSeq" id="WP_011841726.1">
    <property type="nucleotide sequence ID" value="NC_009049.1"/>
</dbReference>
<dbReference type="SMR" id="A3PMR3"/>
<dbReference type="KEGG" id="rsh:Rsph17029_2527"/>
<dbReference type="HOGENOM" id="CLU_030894_6_0_5"/>
<dbReference type="GO" id="GO:0005737">
    <property type="term" value="C:cytoplasm"/>
    <property type="evidence" value="ECO:0007669"/>
    <property type="project" value="UniProtKB-SubCell"/>
</dbReference>
<dbReference type="GO" id="GO:0000287">
    <property type="term" value="F:magnesium ion binding"/>
    <property type="evidence" value="ECO:0007669"/>
    <property type="project" value="UniProtKB-UniRule"/>
</dbReference>
<dbReference type="GO" id="GO:0003676">
    <property type="term" value="F:nucleic acid binding"/>
    <property type="evidence" value="ECO:0007669"/>
    <property type="project" value="InterPro"/>
</dbReference>
<dbReference type="GO" id="GO:0004523">
    <property type="term" value="F:RNA-DNA hybrid ribonuclease activity"/>
    <property type="evidence" value="ECO:0007669"/>
    <property type="project" value="UniProtKB-UniRule"/>
</dbReference>
<dbReference type="GO" id="GO:0043137">
    <property type="term" value="P:DNA replication, removal of RNA primer"/>
    <property type="evidence" value="ECO:0007669"/>
    <property type="project" value="TreeGrafter"/>
</dbReference>
<dbReference type="CDD" id="cd09278">
    <property type="entry name" value="RNase_HI_prokaryote_like"/>
    <property type="match status" value="1"/>
</dbReference>
<dbReference type="FunFam" id="3.30.420.10:FF:000089">
    <property type="entry name" value="Ribonuclease H"/>
    <property type="match status" value="1"/>
</dbReference>
<dbReference type="Gene3D" id="3.30.420.10">
    <property type="entry name" value="Ribonuclease H-like superfamily/Ribonuclease H"/>
    <property type="match status" value="1"/>
</dbReference>
<dbReference type="HAMAP" id="MF_00042">
    <property type="entry name" value="RNase_H"/>
    <property type="match status" value="1"/>
</dbReference>
<dbReference type="InterPro" id="IPR050092">
    <property type="entry name" value="RNase_H"/>
</dbReference>
<dbReference type="InterPro" id="IPR012337">
    <property type="entry name" value="RNaseH-like_sf"/>
</dbReference>
<dbReference type="InterPro" id="IPR002156">
    <property type="entry name" value="RNaseH_domain"/>
</dbReference>
<dbReference type="InterPro" id="IPR036397">
    <property type="entry name" value="RNaseH_sf"/>
</dbReference>
<dbReference type="InterPro" id="IPR022892">
    <property type="entry name" value="RNaseHI"/>
</dbReference>
<dbReference type="NCBIfam" id="NF001236">
    <property type="entry name" value="PRK00203.1"/>
    <property type="match status" value="1"/>
</dbReference>
<dbReference type="PANTHER" id="PTHR10642">
    <property type="entry name" value="RIBONUCLEASE H1"/>
    <property type="match status" value="1"/>
</dbReference>
<dbReference type="PANTHER" id="PTHR10642:SF26">
    <property type="entry name" value="RIBONUCLEASE H1"/>
    <property type="match status" value="1"/>
</dbReference>
<dbReference type="Pfam" id="PF00075">
    <property type="entry name" value="RNase_H"/>
    <property type="match status" value="1"/>
</dbReference>
<dbReference type="SUPFAM" id="SSF53098">
    <property type="entry name" value="Ribonuclease H-like"/>
    <property type="match status" value="1"/>
</dbReference>
<dbReference type="PROSITE" id="PS50879">
    <property type="entry name" value="RNASE_H_1"/>
    <property type="match status" value="1"/>
</dbReference>
<reference key="1">
    <citation type="submission" date="2007-02" db="EMBL/GenBank/DDBJ databases">
        <title>Complete sequence of chromosome 1 of Rhodobacter sphaeroides ATCC 17029.</title>
        <authorList>
            <person name="Copeland A."/>
            <person name="Lucas S."/>
            <person name="Lapidus A."/>
            <person name="Barry K."/>
            <person name="Detter J.C."/>
            <person name="Glavina del Rio T."/>
            <person name="Hammon N."/>
            <person name="Israni S."/>
            <person name="Dalin E."/>
            <person name="Tice H."/>
            <person name="Pitluck S."/>
            <person name="Kiss H."/>
            <person name="Brettin T."/>
            <person name="Bruce D."/>
            <person name="Han C."/>
            <person name="Tapia R."/>
            <person name="Gilna P."/>
            <person name="Schmutz J."/>
            <person name="Larimer F."/>
            <person name="Land M."/>
            <person name="Hauser L."/>
            <person name="Kyrpides N."/>
            <person name="Mikhailova N."/>
            <person name="Richardson P."/>
            <person name="Mackenzie C."/>
            <person name="Choudhary M."/>
            <person name="Donohue T.J."/>
            <person name="Kaplan S."/>
        </authorList>
    </citation>
    <scope>NUCLEOTIDE SEQUENCE [LARGE SCALE GENOMIC DNA]</scope>
    <source>
        <strain>ATCC 17029 / ATH 2.4.9</strain>
    </source>
</reference>
<proteinExistence type="inferred from homology"/>
<evidence type="ECO:0000255" key="1">
    <source>
        <dbReference type="HAMAP-Rule" id="MF_00042"/>
    </source>
</evidence>
<evidence type="ECO:0000255" key="2">
    <source>
        <dbReference type="PROSITE-ProRule" id="PRU00408"/>
    </source>
</evidence>
<accession>A3PMR3</accession>
<protein>
    <recommendedName>
        <fullName evidence="1">Ribonuclease H</fullName>
        <shortName evidence="1">RNase H</shortName>
        <ecNumber evidence="1">3.1.26.4</ecNumber>
    </recommendedName>
</protein>
<gene>
    <name evidence="1" type="primary">rnhA</name>
    <name type="ordered locus">Rsph17029_2527</name>
</gene>
<feature type="chain" id="PRO_0000332664" description="Ribonuclease H">
    <location>
        <begin position="1"/>
        <end position="151"/>
    </location>
</feature>
<feature type="domain" description="RNase H type-1" evidence="2">
    <location>
        <begin position="1"/>
        <end position="146"/>
    </location>
</feature>
<feature type="binding site" evidence="1">
    <location>
        <position position="9"/>
    </location>
    <ligand>
        <name>Mg(2+)</name>
        <dbReference type="ChEBI" id="CHEBI:18420"/>
        <label>1</label>
    </ligand>
</feature>
<feature type="binding site" evidence="1">
    <location>
        <position position="9"/>
    </location>
    <ligand>
        <name>Mg(2+)</name>
        <dbReference type="ChEBI" id="CHEBI:18420"/>
        <label>2</label>
    </ligand>
</feature>
<feature type="binding site" evidence="1">
    <location>
        <position position="52"/>
    </location>
    <ligand>
        <name>Mg(2+)</name>
        <dbReference type="ChEBI" id="CHEBI:18420"/>
        <label>1</label>
    </ligand>
</feature>
<feature type="binding site" evidence="1">
    <location>
        <position position="74"/>
    </location>
    <ligand>
        <name>Mg(2+)</name>
        <dbReference type="ChEBI" id="CHEBI:18420"/>
        <label>1</label>
    </ligand>
</feature>
<feature type="binding site" evidence="1">
    <location>
        <position position="138"/>
    </location>
    <ligand>
        <name>Mg(2+)</name>
        <dbReference type="ChEBI" id="CHEBI:18420"/>
        <label>2</label>
    </ligand>
</feature>
<name>RNH_CERS1</name>
<keyword id="KW-0963">Cytoplasm</keyword>
<keyword id="KW-0255">Endonuclease</keyword>
<keyword id="KW-0378">Hydrolase</keyword>
<keyword id="KW-0460">Magnesium</keyword>
<keyword id="KW-0479">Metal-binding</keyword>
<keyword id="KW-0540">Nuclease</keyword>
<organism>
    <name type="scientific">Cereibacter sphaeroides (strain ATCC 17029 / ATH 2.4.9)</name>
    <name type="common">Rhodobacter sphaeroides</name>
    <dbReference type="NCBI Taxonomy" id="349101"/>
    <lineage>
        <taxon>Bacteria</taxon>
        <taxon>Pseudomonadati</taxon>
        <taxon>Pseudomonadota</taxon>
        <taxon>Alphaproteobacteria</taxon>
        <taxon>Rhodobacterales</taxon>
        <taxon>Paracoccaceae</taxon>
        <taxon>Cereibacter</taxon>
    </lineage>
</organism>
<comment type="function">
    <text evidence="1">Endonuclease that specifically degrades the RNA of RNA-DNA hybrids.</text>
</comment>
<comment type="catalytic activity">
    <reaction evidence="1">
        <text>Endonucleolytic cleavage to 5'-phosphomonoester.</text>
        <dbReference type="EC" id="3.1.26.4"/>
    </reaction>
</comment>
<comment type="cofactor">
    <cofactor evidence="1">
        <name>Mg(2+)</name>
        <dbReference type="ChEBI" id="CHEBI:18420"/>
    </cofactor>
    <text evidence="1">Binds 1 Mg(2+) ion per subunit. May bind a second metal ion at a regulatory site, or after substrate binding.</text>
</comment>
<comment type="subunit">
    <text evidence="1">Monomer.</text>
</comment>
<comment type="subcellular location">
    <subcellularLocation>
        <location evidence="1">Cytoplasm</location>
    </subcellularLocation>
</comment>
<comment type="similarity">
    <text evidence="1">Belongs to the RNase H family.</text>
</comment>
<sequence length="151" mass="16782">MPDLYAYTDGACSGNPGPGGWGVLMLAREGEAVVKERTLQGGEVLTTNNRMELMAAISALEALTRPTEITIVTDSAYVKNGVTTWIHGWKRNGWKTADRKPVKNAELWERLDAAQQRHKVVWRWIKGHAGHAENERADELARAGMAPFKTR</sequence>